<keyword id="KW-0963">Cytoplasm</keyword>
<keyword id="KW-0396">Initiation factor</keyword>
<keyword id="KW-0648">Protein biosynthesis</keyword>
<accession>Q0U0X1</accession>
<comment type="function">
    <text evidence="1">Component of the eukaryotic translation initiation factor 3 (eIF-3) complex, which is involved in protein synthesis of a specialized repertoire of mRNAs and, together with other initiation factors, stimulates binding of mRNA and methionyl-tRNAi to the 40S ribosome. The eIF-3 complex specifically targets and initiates translation of a subset of mRNAs involved in cell proliferation.</text>
</comment>
<comment type="subunit">
    <text evidence="1">Component of the eukaryotic translation initiation factor 3 (eIF-3) complex.</text>
</comment>
<comment type="subcellular location">
    <subcellularLocation>
        <location evidence="1">Cytoplasm</location>
    </subcellularLocation>
</comment>
<comment type="similarity">
    <text evidence="1">Belongs to the eIF-3 subunit E family.</text>
</comment>
<comment type="sequence caution" evidence="3">
    <conflict type="frameshift">
        <sequence resource="EMBL-CDS" id="EAT78027"/>
    </conflict>
</comment>
<feature type="chain" id="PRO_0000365991" description="Eukaryotic translation initiation factor 3 subunit E">
    <location>
        <begin position="1"/>
        <end position="435"/>
    </location>
</feature>
<feature type="domain" description="PCI" evidence="2">
    <location>
        <begin position="241"/>
        <end position="409"/>
    </location>
</feature>
<organism>
    <name type="scientific">Phaeosphaeria nodorum (strain SN15 / ATCC MYA-4574 / FGSC 10173)</name>
    <name type="common">Glume blotch fungus</name>
    <name type="synonym">Parastagonospora nodorum</name>
    <dbReference type="NCBI Taxonomy" id="321614"/>
    <lineage>
        <taxon>Eukaryota</taxon>
        <taxon>Fungi</taxon>
        <taxon>Dikarya</taxon>
        <taxon>Ascomycota</taxon>
        <taxon>Pezizomycotina</taxon>
        <taxon>Dothideomycetes</taxon>
        <taxon>Pleosporomycetidae</taxon>
        <taxon>Pleosporales</taxon>
        <taxon>Pleosporineae</taxon>
        <taxon>Phaeosphaeriaceae</taxon>
        <taxon>Parastagonospora</taxon>
    </lineage>
</organism>
<evidence type="ECO:0000255" key="1">
    <source>
        <dbReference type="HAMAP-Rule" id="MF_03004"/>
    </source>
</evidence>
<evidence type="ECO:0000255" key="2">
    <source>
        <dbReference type="PROSITE-ProRule" id="PRU01185"/>
    </source>
</evidence>
<evidence type="ECO:0000305" key="3"/>
<proteinExistence type="inferred from homology"/>
<gene>
    <name evidence="1" type="primary">INT6</name>
    <name type="ORF">SNOG_14487</name>
</gene>
<protein>
    <recommendedName>
        <fullName evidence="1">Eukaryotic translation initiation factor 3 subunit E</fullName>
        <shortName evidence="1">eIF3e</shortName>
    </recommendedName>
</protein>
<sequence length="435" mass="50505">MAESATDSGNVAEQYSLLPKLMPNLDRHLIYPLLNFSADEDAEQPLDQKKLLLELLKPTNMTDFVGQLYQDVHNLDDMPDEYKTKRDQVLQRRDKLEEETSKISGLLDDENVVTNLRSDKVQNLAYLKDTHGVTVEMVNQLYEFGSFQYSCGVYPHAAELLYRFRVLVRNIQEREATWGKLACEFLSVNWDSAIEEINKLKETIDTRLFNNPLAQLQHRTWLIHWSLFPLFNHEPARESLTDMFFSPSYINTIQTNCPWILRYLAAAVITNRNKGRNSNQYQKQLKDLIRIVRQEGYEYSDPVTDFIKALYIDFDFEEAQKKLSETEEILKNDFFLLGAADQFVDAARHLISESYCKIHQRIDIKDLSTRLGLSQDEGEKWIVNLIRDTRVDAKIDYKAGTVIMNHPPQSVYQQVIERTKGGFFRTQVLSAAVAK</sequence>
<name>EIF3E_PHANO</name>
<reference key="1">
    <citation type="journal article" date="2007" name="Plant Cell">
        <title>Dothideomycete-plant interactions illuminated by genome sequencing and EST analysis of the wheat pathogen Stagonospora nodorum.</title>
        <authorList>
            <person name="Hane J.K."/>
            <person name="Lowe R.G.T."/>
            <person name="Solomon P.S."/>
            <person name="Tan K.-C."/>
            <person name="Schoch C.L."/>
            <person name="Spatafora J.W."/>
            <person name="Crous P.W."/>
            <person name="Kodira C.D."/>
            <person name="Birren B.W."/>
            <person name="Galagan J.E."/>
            <person name="Torriani S.F.F."/>
            <person name="McDonald B.A."/>
            <person name="Oliver R.P."/>
        </authorList>
    </citation>
    <scope>NUCLEOTIDE SEQUENCE [LARGE SCALE GENOMIC DNA]</scope>
    <source>
        <strain>SN15 / ATCC MYA-4574 / FGSC 10173</strain>
    </source>
</reference>
<dbReference type="EMBL" id="CH445356">
    <property type="protein sequence ID" value="EAT78027.2"/>
    <property type="status" value="ALT_FRAME"/>
    <property type="molecule type" value="Genomic_DNA"/>
</dbReference>
<dbReference type="RefSeq" id="XP_001804671.1">
    <property type="nucleotide sequence ID" value="XM_001804619.1"/>
</dbReference>
<dbReference type="SMR" id="Q0U0X1"/>
<dbReference type="STRING" id="321614.Q0U0X1"/>
<dbReference type="GeneID" id="5981596"/>
<dbReference type="KEGG" id="pno:SNOG_14487"/>
<dbReference type="VEuPathDB" id="FungiDB:JI435_144870"/>
<dbReference type="eggNOG" id="KOG2758">
    <property type="taxonomic scope" value="Eukaryota"/>
</dbReference>
<dbReference type="InParanoid" id="Q0U0X1"/>
<dbReference type="Proteomes" id="UP000001055">
    <property type="component" value="Unassembled WGS sequence"/>
</dbReference>
<dbReference type="GO" id="GO:0016282">
    <property type="term" value="C:eukaryotic 43S preinitiation complex"/>
    <property type="evidence" value="ECO:0007669"/>
    <property type="project" value="UniProtKB-UniRule"/>
</dbReference>
<dbReference type="GO" id="GO:0033290">
    <property type="term" value="C:eukaryotic 48S preinitiation complex"/>
    <property type="evidence" value="ECO:0007669"/>
    <property type="project" value="UniProtKB-UniRule"/>
</dbReference>
<dbReference type="GO" id="GO:0005852">
    <property type="term" value="C:eukaryotic translation initiation factor 3 complex"/>
    <property type="evidence" value="ECO:0000318"/>
    <property type="project" value="GO_Central"/>
</dbReference>
<dbReference type="GO" id="GO:0071540">
    <property type="term" value="C:eukaryotic translation initiation factor 3 complex, eIF3e"/>
    <property type="evidence" value="ECO:0007669"/>
    <property type="project" value="UniProtKB-UniRule"/>
</dbReference>
<dbReference type="GO" id="GO:0005634">
    <property type="term" value="C:nucleus"/>
    <property type="evidence" value="ECO:0000318"/>
    <property type="project" value="GO_Central"/>
</dbReference>
<dbReference type="GO" id="GO:0003743">
    <property type="term" value="F:translation initiation factor activity"/>
    <property type="evidence" value="ECO:0007669"/>
    <property type="project" value="UniProtKB-UniRule"/>
</dbReference>
<dbReference type="GO" id="GO:0001732">
    <property type="term" value="P:formation of cytoplasmic translation initiation complex"/>
    <property type="evidence" value="ECO:0007669"/>
    <property type="project" value="UniProtKB-UniRule"/>
</dbReference>
<dbReference type="GO" id="GO:0006413">
    <property type="term" value="P:translational initiation"/>
    <property type="evidence" value="ECO:0000318"/>
    <property type="project" value="GO_Central"/>
</dbReference>
<dbReference type="CDD" id="cd21378">
    <property type="entry name" value="eIF3E"/>
    <property type="match status" value="1"/>
</dbReference>
<dbReference type="HAMAP" id="MF_03004">
    <property type="entry name" value="eIF3e"/>
    <property type="match status" value="1"/>
</dbReference>
<dbReference type="InterPro" id="IPR016650">
    <property type="entry name" value="eIF3e"/>
</dbReference>
<dbReference type="InterPro" id="IPR019010">
    <property type="entry name" value="eIF3e_N"/>
</dbReference>
<dbReference type="InterPro" id="IPR000717">
    <property type="entry name" value="PCI_dom"/>
</dbReference>
<dbReference type="InterPro" id="IPR036390">
    <property type="entry name" value="WH_DNA-bd_sf"/>
</dbReference>
<dbReference type="PANTHER" id="PTHR10317">
    <property type="entry name" value="EUKARYOTIC TRANSLATION INITIATION FACTOR 3 SUBUNIT E"/>
    <property type="match status" value="1"/>
</dbReference>
<dbReference type="Pfam" id="PF09440">
    <property type="entry name" value="eIF3_N"/>
    <property type="match status" value="1"/>
</dbReference>
<dbReference type="Pfam" id="PF21357">
    <property type="entry name" value="EIF3E_C"/>
    <property type="match status" value="1"/>
</dbReference>
<dbReference type="Pfam" id="PF01399">
    <property type="entry name" value="PCI"/>
    <property type="match status" value="1"/>
</dbReference>
<dbReference type="PIRSF" id="PIRSF016255">
    <property type="entry name" value="eIF3e_su6"/>
    <property type="match status" value="1"/>
</dbReference>
<dbReference type="SMART" id="SM01186">
    <property type="entry name" value="eIF3_N"/>
    <property type="match status" value="1"/>
</dbReference>
<dbReference type="SMART" id="SM00088">
    <property type="entry name" value="PINT"/>
    <property type="match status" value="1"/>
</dbReference>
<dbReference type="SUPFAM" id="SSF46785">
    <property type="entry name" value="Winged helix' DNA-binding domain"/>
    <property type="match status" value="1"/>
</dbReference>
<dbReference type="PROSITE" id="PS50250">
    <property type="entry name" value="PCI"/>
    <property type="match status" value="1"/>
</dbReference>